<name>Y1957_DESOH</name>
<protein>
    <recommendedName>
        <fullName evidence="1">UPF0251 protein Dole_1957</fullName>
    </recommendedName>
</protein>
<evidence type="ECO:0000255" key="1">
    <source>
        <dbReference type="HAMAP-Rule" id="MF_00674"/>
    </source>
</evidence>
<sequence length="138" mass="15291">MPRPTKTRTVVSEPDVCYFKPRGVPLRMLREVGLTVDELEALMLADLQGLPHEEAGRHMNISRATFGRVVRKARKTVADALVNGMAIRIEGGNYLRTGPDGAVLFCGKCRQEWPVVSSGGTPHECPMCKKEEDKKAEK</sequence>
<feature type="chain" id="PRO_1000131580" description="UPF0251 protein Dole_1957">
    <location>
        <begin position="1"/>
        <end position="138"/>
    </location>
</feature>
<keyword id="KW-1185">Reference proteome</keyword>
<reference key="1">
    <citation type="submission" date="2007-10" db="EMBL/GenBank/DDBJ databases">
        <title>Complete sequence of Desulfococcus oleovorans Hxd3.</title>
        <authorList>
            <consortium name="US DOE Joint Genome Institute"/>
            <person name="Copeland A."/>
            <person name="Lucas S."/>
            <person name="Lapidus A."/>
            <person name="Barry K."/>
            <person name="Glavina del Rio T."/>
            <person name="Dalin E."/>
            <person name="Tice H."/>
            <person name="Pitluck S."/>
            <person name="Kiss H."/>
            <person name="Brettin T."/>
            <person name="Bruce D."/>
            <person name="Detter J.C."/>
            <person name="Han C."/>
            <person name="Schmutz J."/>
            <person name="Larimer F."/>
            <person name="Land M."/>
            <person name="Hauser L."/>
            <person name="Kyrpides N."/>
            <person name="Kim E."/>
            <person name="Wawrik B."/>
            <person name="Richardson P."/>
        </authorList>
    </citation>
    <scope>NUCLEOTIDE SEQUENCE [LARGE SCALE GENOMIC DNA]</scope>
    <source>
        <strain>DSM 6200 / JCM 39069 / Hxd3</strain>
    </source>
</reference>
<gene>
    <name type="ordered locus">Dole_1957</name>
</gene>
<organism>
    <name type="scientific">Desulfosudis oleivorans (strain DSM 6200 / JCM 39069 / Hxd3)</name>
    <name type="common">Desulfococcus oleovorans</name>
    <dbReference type="NCBI Taxonomy" id="96561"/>
    <lineage>
        <taxon>Bacteria</taxon>
        <taxon>Pseudomonadati</taxon>
        <taxon>Thermodesulfobacteriota</taxon>
        <taxon>Desulfobacteria</taxon>
        <taxon>Desulfobacterales</taxon>
        <taxon>Desulfosudaceae</taxon>
        <taxon>Desulfosudis</taxon>
    </lineage>
</organism>
<accession>A8ZT78</accession>
<comment type="similarity">
    <text evidence="1">Belongs to the UPF0251 family.</text>
</comment>
<dbReference type="EMBL" id="CP000859">
    <property type="protein sequence ID" value="ABW67761.1"/>
    <property type="molecule type" value="Genomic_DNA"/>
</dbReference>
<dbReference type="RefSeq" id="WP_012175373.1">
    <property type="nucleotide sequence ID" value="NC_009943.1"/>
</dbReference>
<dbReference type="STRING" id="96561.Dole_1957"/>
<dbReference type="KEGG" id="dol:Dole_1957"/>
<dbReference type="eggNOG" id="COG1342">
    <property type="taxonomic scope" value="Bacteria"/>
</dbReference>
<dbReference type="HOGENOM" id="CLU_094511_0_1_7"/>
<dbReference type="OrthoDB" id="280278at2"/>
<dbReference type="Proteomes" id="UP000008561">
    <property type="component" value="Chromosome"/>
</dbReference>
<dbReference type="Gene3D" id="1.10.10.10">
    <property type="entry name" value="Winged helix-like DNA-binding domain superfamily/Winged helix DNA-binding domain"/>
    <property type="match status" value="1"/>
</dbReference>
<dbReference type="HAMAP" id="MF_00674">
    <property type="entry name" value="UPF0251"/>
    <property type="match status" value="1"/>
</dbReference>
<dbReference type="InterPro" id="IPR013324">
    <property type="entry name" value="RNA_pol_sigma_r3/r4-like"/>
</dbReference>
<dbReference type="InterPro" id="IPR002852">
    <property type="entry name" value="UPF0251"/>
</dbReference>
<dbReference type="InterPro" id="IPR036388">
    <property type="entry name" value="WH-like_DNA-bd_sf"/>
</dbReference>
<dbReference type="PANTHER" id="PTHR37478">
    <property type="match status" value="1"/>
</dbReference>
<dbReference type="PANTHER" id="PTHR37478:SF2">
    <property type="entry name" value="UPF0251 PROTEIN TK0562"/>
    <property type="match status" value="1"/>
</dbReference>
<dbReference type="Pfam" id="PF02001">
    <property type="entry name" value="DUF134"/>
    <property type="match status" value="1"/>
</dbReference>
<dbReference type="SUPFAM" id="SSF88659">
    <property type="entry name" value="Sigma3 and sigma4 domains of RNA polymerase sigma factors"/>
    <property type="match status" value="1"/>
</dbReference>
<proteinExistence type="inferred from homology"/>